<name>YHCO_ECOL6</name>
<feature type="chain" id="PRO_0000169491" description="Uncharacterized protein YhcO">
    <location>
        <begin position="1"/>
        <end position="90"/>
    </location>
</feature>
<reference key="1">
    <citation type="journal article" date="2002" name="Proc. Natl. Acad. Sci. U.S.A.">
        <title>Extensive mosaic structure revealed by the complete genome sequence of uropathogenic Escherichia coli.</title>
        <authorList>
            <person name="Welch R.A."/>
            <person name="Burland V."/>
            <person name="Plunkett G. III"/>
            <person name="Redford P."/>
            <person name="Roesch P."/>
            <person name="Rasko D."/>
            <person name="Buckles E.L."/>
            <person name="Liou S.-R."/>
            <person name="Boutin A."/>
            <person name="Hackett J."/>
            <person name="Stroud D."/>
            <person name="Mayhew G.F."/>
            <person name="Rose D.J."/>
            <person name="Zhou S."/>
            <person name="Schwartz D.C."/>
            <person name="Perna N.T."/>
            <person name="Mobley H.L.T."/>
            <person name="Donnenberg M.S."/>
            <person name="Blattner F.R."/>
        </authorList>
    </citation>
    <scope>NUCLEOTIDE SEQUENCE [LARGE SCALE GENOMIC DNA]</scope>
    <source>
        <strain>CFT073 / ATCC 700928 / UPEC</strain>
    </source>
</reference>
<protein>
    <recommendedName>
        <fullName>Uncharacterized protein YhcO</fullName>
    </recommendedName>
</protein>
<comment type="similarity">
    <text evidence="1">Belongs to the barstar family.</text>
</comment>
<accession>P64617</accession>
<accession>P46480</accession>
<proteinExistence type="inferred from homology"/>
<dbReference type="EMBL" id="AE014075">
    <property type="protein sequence ID" value="AAN82434.1"/>
    <property type="molecule type" value="Genomic_DNA"/>
</dbReference>
<dbReference type="RefSeq" id="WP_001029013.1">
    <property type="nucleotide sequence ID" value="NZ_CP051263.1"/>
</dbReference>
<dbReference type="SMR" id="P64617"/>
<dbReference type="STRING" id="199310.c3994"/>
<dbReference type="KEGG" id="ecc:c3994"/>
<dbReference type="eggNOG" id="COG2732">
    <property type="taxonomic scope" value="Bacteria"/>
</dbReference>
<dbReference type="HOGENOM" id="CLU_121832_2_0_6"/>
<dbReference type="BioCyc" id="ECOL199310:C3994-MONOMER"/>
<dbReference type="Proteomes" id="UP000001410">
    <property type="component" value="Chromosome"/>
</dbReference>
<dbReference type="CDD" id="cd05142">
    <property type="entry name" value="Barstar"/>
    <property type="match status" value="1"/>
</dbReference>
<dbReference type="Gene3D" id="3.30.370.10">
    <property type="entry name" value="Barstar-like"/>
    <property type="match status" value="1"/>
</dbReference>
<dbReference type="InterPro" id="IPR000468">
    <property type="entry name" value="Barstar"/>
</dbReference>
<dbReference type="InterPro" id="IPR035905">
    <property type="entry name" value="Barstar-like_sf"/>
</dbReference>
<dbReference type="Pfam" id="PF01337">
    <property type="entry name" value="Barstar"/>
    <property type="match status" value="1"/>
</dbReference>
<dbReference type="SUPFAM" id="SSF52038">
    <property type="entry name" value="Barstar-related"/>
    <property type="match status" value="1"/>
</dbReference>
<keyword id="KW-1185">Reference proteome</keyword>
<evidence type="ECO:0000305" key="1"/>
<gene>
    <name type="primary">yhcO</name>
    <name type="ordered locus">c3994</name>
</gene>
<organism>
    <name type="scientific">Escherichia coli O6:H1 (strain CFT073 / ATCC 700928 / UPEC)</name>
    <dbReference type="NCBI Taxonomy" id="199310"/>
    <lineage>
        <taxon>Bacteria</taxon>
        <taxon>Pseudomonadati</taxon>
        <taxon>Pseudomonadota</taxon>
        <taxon>Gammaproteobacteria</taxon>
        <taxon>Enterobacterales</taxon>
        <taxon>Enterobacteriaceae</taxon>
        <taxon>Escherichia</taxon>
    </lineage>
</organism>
<sequence length="90" mass="10796">MNIYTFDFDEIESQEDFYRDFSQTFGLAKDKVRDLDSLWDVLMNDVLPLPLEIEFVHLGEKTRRRFGALILLFDEAEEELEGHLRFNVRH</sequence>